<organism>
    <name type="scientific">Schizosaccharomyces pombe (strain 972 / ATCC 24843)</name>
    <name type="common">Fission yeast</name>
    <dbReference type="NCBI Taxonomy" id="284812"/>
    <lineage>
        <taxon>Eukaryota</taxon>
        <taxon>Fungi</taxon>
        <taxon>Dikarya</taxon>
        <taxon>Ascomycota</taxon>
        <taxon>Taphrinomycotina</taxon>
        <taxon>Schizosaccharomycetes</taxon>
        <taxon>Schizosaccharomycetales</taxon>
        <taxon>Schizosaccharomycetaceae</taxon>
        <taxon>Schizosaccharomyces</taxon>
    </lineage>
</organism>
<name>NPY1_SCHPO</name>
<sequence length="376" mass="42808">MQGFKIARHFELPTAPSQFFAGSSLNRLSFLRSNREFLNKAFYDHTTRFLPFCDLNPALLVKDDKLVTLSYPQISKYFTFSPFEHTDKQIAERFSKGESLPVLVYMGNEERNGPTDNWSQHNVFAIDITGIDELQQSIRDNGGTFVNLRSIFTEQYQLSASDSGACAFARSILDWISRYRFCPGCGKRNIPTMGGTKLVCSDVLLNDDSNCPSKKGINNYQYPRTDPCVIMVILSHDMQHILLGRALRHPKGLYACLAGFLEPGESLEEAVVRETYEESGVDVEKVLYYASQPWPFPQSLMLACFGIARKNAKIQRDKDLELEDVRFFSREEVLRSLEWDAKDGPAPILFPPKLSIARNLIQAFAYDDWTNSQVKM</sequence>
<comment type="function">
    <text evidence="2 4">mRNA decapping enzyme that specifically removes the nicotinamide adenine dinucleotide (NAD) cap from a subset of mRNAs by hydrolyzing the diphosphate linkage to produce nicotinamide mononucleotide (NMN) and 5' monophosphate mRNA. The NAD-cap is present at the 5'-end of some RNAs; in contrast to the canonical N7 methylguanosine (m7G) cap, the NAD cap promotes mRNA decay (By similarity). Mediates the hydrolysis of some nucleoside diphosphate derivatives (By similarity).</text>
</comment>
<comment type="catalytic activity">
    <reaction evidence="4">
        <text>a 5'-end NAD(+)-phospho-ribonucleoside in mRNA + H2O = a 5'-end phospho-adenosine-phospho-ribonucleoside in mRNA + beta-nicotinamide D-ribonucleotide + 2 H(+)</text>
        <dbReference type="Rhea" id="RHEA:60876"/>
        <dbReference type="Rhea" id="RHEA-COMP:15698"/>
        <dbReference type="Rhea" id="RHEA-COMP:15719"/>
        <dbReference type="ChEBI" id="CHEBI:14649"/>
        <dbReference type="ChEBI" id="CHEBI:15377"/>
        <dbReference type="ChEBI" id="CHEBI:15378"/>
        <dbReference type="ChEBI" id="CHEBI:144029"/>
        <dbReference type="ChEBI" id="CHEBI:144051"/>
    </reaction>
    <physiologicalReaction direction="left-to-right" evidence="4">
        <dbReference type="Rhea" id="RHEA:60877"/>
    </physiologicalReaction>
</comment>
<comment type="catalytic activity">
    <reaction evidence="2">
        <text>NAD(+) + H2O = beta-nicotinamide D-ribonucleotide + AMP + 2 H(+)</text>
        <dbReference type="Rhea" id="RHEA:11800"/>
        <dbReference type="ChEBI" id="CHEBI:14649"/>
        <dbReference type="ChEBI" id="CHEBI:15377"/>
        <dbReference type="ChEBI" id="CHEBI:15378"/>
        <dbReference type="ChEBI" id="CHEBI:57540"/>
        <dbReference type="ChEBI" id="CHEBI:456215"/>
        <dbReference type="EC" id="3.6.1.22"/>
    </reaction>
</comment>
<comment type="catalytic activity">
    <reaction evidence="2">
        <text>NADH + H2O = reduced beta-nicotinamide D-ribonucleotide + AMP + 2 H(+)</text>
        <dbReference type="Rhea" id="RHEA:48868"/>
        <dbReference type="ChEBI" id="CHEBI:15377"/>
        <dbReference type="ChEBI" id="CHEBI:15378"/>
        <dbReference type="ChEBI" id="CHEBI:57945"/>
        <dbReference type="ChEBI" id="CHEBI:90832"/>
        <dbReference type="ChEBI" id="CHEBI:456215"/>
        <dbReference type="EC" id="3.6.1.22"/>
    </reaction>
</comment>
<comment type="cofactor">
    <cofactor evidence="4">
        <name>Mg(2+)</name>
        <dbReference type="ChEBI" id="CHEBI:18420"/>
    </cofactor>
    <text evidence="4">Binds 3 Mg(2+) ions per subunit.</text>
</comment>
<comment type="cofactor">
    <cofactor evidence="4">
        <name>Zn(2+)</name>
        <dbReference type="ChEBI" id="CHEBI:29105"/>
    </cofactor>
    <text evidence="4">Binds 1 zinc ion per subunit.</text>
</comment>
<comment type="subunit">
    <text evidence="1">Homodimer.</text>
</comment>
<comment type="similarity">
    <text evidence="6">Belongs to the Nudix hydrolase family. NudC subfamily.</text>
</comment>
<accession>Q9Y7J0</accession>
<dbReference type="EC" id="3.6.1.-" evidence="4"/>
<dbReference type="EC" id="3.6.1.22" evidence="2"/>
<dbReference type="EMBL" id="CU329671">
    <property type="protein sequence ID" value="CAB39798.1"/>
    <property type="molecule type" value="Genomic_DNA"/>
</dbReference>
<dbReference type="PIR" id="T39685">
    <property type="entry name" value="T39685"/>
</dbReference>
<dbReference type="RefSeq" id="NP_596286.1">
    <property type="nucleotide sequence ID" value="NM_001022208.2"/>
</dbReference>
<dbReference type="SMR" id="Q9Y7J0"/>
<dbReference type="BioGRID" id="276659">
    <property type="interactions" value="21"/>
</dbReference>
<dbReference type="FunCoup" id="Q9Y7J0">
    <property type="interactions" value="107"/>
</dbReference>
<dbReference type="STRING" id="284812.Q9Y7J0"/>
<dbReference type="iPTMnet" id="Q9Y7J0"/>
<dbReference type="PaxDb" id="4896-SPBC1778.03c.1"/>
<dbReference type="EnsemblFungi" id="SPBC1778.03c.1">
    <property type="protein sequence ID" value="SPBC1778.03c.1:pep"/>
    <property type="gene ID" value="SPBC1778.03c"/>
</dbReference>
<dbReference type="KEGG" id="spo:2540122"/>
<dbReference type="PomBase" id="SPBC1778.03c"/>
<dbReference type="VEuPathDB" id="FungiDB:SPBC1778.03c"/>
<dbReference type="eggNOG" id="KOG3084">
    <property type="taxonomic scope" value="Eukaryota"/>
</dbReference>
<dbReference type="HOGENOM" id="CLU_037162_0_2_1"/>
<dbReference type="InParanoid" id="Q9Y7J0"/>
<dbReference type="OMA" id="YSHAKMY"/>
<dbReference type="PhylomeDB" id="Q9Y7J0"/>
<dbReference type="Reactome" id="R-SPO-197264">
    <property type="pathway name" value="Nicotinamide salvaging"/>
</dbReference>
<dbReference type="PRO" id="PR:Q9Y7J0"/>
<dbReference type="Proteomes" id="UP000002485">
    <property type="component" value="Chromosome II"/>
</dbReference>
<dbReference type="GO" id="GO:0005829">
    <property type="term" value="C:cytosol"/>
    <property type="evidence" value="ECO:0007005"/>
    <property type="project" value="PomBase"/>
</dbReference>
<dbReference type="GO" id="GO:0005634">
    <property type="term" value="C:nucleus"/>
    <property type="evidence" value="ECO:0007005"/>
    <property type="project" value="PomBase"/>
</dbReference>
<dbReference type="GO" id="GO:0005777">
    <property type="term" value="C:peroxisome"/>
    <property type="evidence" value="ECO:0000318"/>
    <property type="project" value="GO_Central"/>
</dbReference>
<dbReference type="GO" id="GO:0046872">
    <property type="term" value="F:metal ion binding"/>
    <property type="evidence" value="ECO:0007669"/>
    <property type="project" value="UniProtKB-KW"/>
</dbReference>
<dbReference type="GO" id="GO:0000210">
    <property type="term" value="F:NAD+ diphosphatase activity"/>
    <property type="evidence" value="ECO:0000266"/>
    <property type="project" value="PomBase"/>
</dbReference>
<dbReference type="GO" id="GO:0035529">
    <property type="term" value="F:NADH pyrophosphatase activity"/>
    <property type="evidence" value="ECO:0000318"/>
    <property type="project" value="GO_Central"/>
</dbReference>
<dbReference type="GO" id="GO:0110153">
    <property type="term" value="F:RNA NAD-cap (NMN-forming) hydrolase activity"/>
    <property type="evidence" value="ECO:0007669"/>
    <property type="project" value="RHEA"/>
</dbReference>
<dbReference type="GO" id="GO:0019677">
    <property type="term" value="P:NAD catabolic process"/>
    <property type="evidence" value="ECO:0000318"/>
    <property type="project" value="GO_Central"/>
</dbReference>
<dbReference type="GO" id="GO:0006734">
    <property type="term" value="P:NADH metabolic process"/>
    <property type="evidence" value="ECO:0000318"/>
    <property type="project" value="GO_Central"/>
</dbReference>
<dbReference type="GO" id="GO:0006742">
    <property type="term" value="P:NADP catabolic process"/>
    <property type="evidence" value="ECO:0000318"/>
    <property type="project" value="GO_Central"/>
</dbReference>
<dbReference type="CDD" id="cd03429">
    <property type="entry name" value="NUDIX_NADH_pyrophosphatase_Nudt13"/>
    <property type="match status" value="1"/>
</dbReference>
<dbReference type="Gene3D" id="3.90.79.20">
    <property type="match status" value="1"/>
</dbReference>
<dbReference type="Gene3D" id="3.90.79.10">
    <property type="entry name" value="Nucleoside Triphosphate Pyrophosphohydrolase"/>
    <property type="match status" value="1"/>
</dbReference>
<dbReference type="InterPro" id="IPR050241">
    <property type="entry name" value="NAD-cap_RNA_hydrolase_NudC"/>
</dbReference>
<dbReference type="InterPro" id="IPR015375">
    <property type="entry name" value="NADH_PPase-like_N"/>
</dbReference>
<dbReference type="InterPro" id="IPR049734">
    <property type="entry name" value="NudC-like_C"/>
</dbReference>
<dbReference type="InterPro" id="IPR015797">
    <property type="entry name" value="NUDIX_hydrolase-like_dom_sf"/>
</dbReference>
<dbReference type="InterPro" id="IPR020084">
    <property type="entry name" value="NUDIX_hydrolase_CS"/>
</dbReference>
<dbReference type="InterPro" id="IPR000086">
    <property type="entry name" value="NUDIX_hydrolase_dom"/>
</dbReference>
<dbReference type="NCBIfam" id="NF001299">
    <property type="entry name" value="PRK00241.1"/>
    <property type="match status" value="1"/>
</dbReference>
<dbReference type="PANTHER" id="PTHR42904:SF6">
    <property type="entry name" value="NAD-CAPPED RNA HYDROLASE NUDT12"/>
    <property type="match status" value="1"/>
</dbReference>
<dbReference type="PANTHER" id="PTHR42904">
    <property type="entry name" value="NUDIX HYDROLASE, NUDC SUBFAMILY"/>
    <property type="match status" value="1"/>
</dbReference>
<dbReference type="Pfam" id="PF00293">
    <property type="entry name" value="NUDIX"/>
    <property type="match status" value="1"/>
</dbReference>
<dbReference type="Pfam" id="PF09296">
    <property type="entry name" value="NUDIX-like"/>
    <property type="match status" value="1"/>
</dbReference>
<dbReference type="SUPFAM" id="SSF55811">
    <property type="entry name" value="Nudix"/>
    <property type="match status" value="1"/>
</dbReference>
<dbReference type="PROSITE" id="PS51462">
    <property type="entry name" value="NUDIX"/>
    <property type="match status" value="1"/>
</dbReference>
<dbReference type="PROSITE" id="PS00893">
    <property type="entry name" value="NUDIX_BOX"/>
    <property type="match status" value="1"/>
</dbReference>
<proteinExistence type="inferred from homology"/>
<feature type="chain" id="PRO_0000056960" description="NAD-capped RNA hydrolase">
    <location>
        <begin position="1"/>
        <end position="376"/>
    </location>
</feature>
<feature type="domain" description="Nudix hydrolase" evidence="5">
    <location>
        <begin position="223"/>
        <end position="351"/>
    </location>
</feature>
<feature type="short sequence motif" description="Nudix box">
    <location>
        <begin position="259"/>
        <end position="280"/>
    </location>
</feature>
<feature type="short sequence motif" description="Microbody targeting signal" evidence="3">
    <location>
        <begin position="374"/>
        <end position="376"/>
    </location>
</feature>
<feature type="binding site" evidence="4">
    <location>
        <position position="182"/>
    </location>
    <ligand>
        <name>Zn(2+)</name>
        <dbReference type="ChEBI" id="CHEBI:29105"/>
    </ligand>
</feature>
<feature type="binding site" evidence="4">
    <location>
        <position position="185"/>
    </location>
    <ligand>
        <name>Zn(2+)</name>
        <dbReference type="ChEBI" id="CHEBI:29105"/>
    </ligand>
</feature>
<feature type="binding site" evidence="4">
    <location>
        <position position="200"/>
    </location>
    <ligand>
        <name>Zn(2+)</name>
        <dbReference type="ChEBI" id="CHEBI:29105"/>
    </ligand>
</feature>
<feature type="binding site" evidence="4">
    <location>
        <position position="211"/>
    </location>
    <ligand>
        <name>Zn(2+)</name>
        <dbReference type="ChEBI" id="CHEBI:29105"/>
    </ligand>
</feature>
<feature type="binding site" evidence="4">
    <location>
        <position position="222"/>
    </location>
    <ligand>
        <name>substrate</name>
    </ligand>
</feature>
<feature type="binding site" evidence="4">
    <location>
        <begin position="258"/>
        <end position="260"/>
    </location>
    <ligand>
        <name>substrate</name>
    </ligand>
</feature>
<feature type="binding site" evidence="4">
    <location>
        <position position="258"/>
    </location>
    <ligand>
        <name>Mg(2+)</name>
        <dbReference type="ChEBI" id="CHEBI:18420"/>
        <label>1</label>
    </ligand>
</feature>
<feature type="binding site" evidence="4">
    <location>
        <position position="274"/>
    </location>
    <ligand>
        <name>Mg(2+)</name>
        <dbReference type="ChEBI" id="CHEBI:18420"/>
        <label>2</label>
    </ligand>
</feature>
<feature type="binding site" evidence="4">
    <location>
        <position position="274"/>
    </location>
    <ligand>
        <name>Mg(2+)</name>
        <dbReference type="ChEBI" id="CHEBI:18420"/>
        <label>3</label>
    </ligand>
</feature>
<feature type="binding site" evidence="4">
    <location>
        <position position="274"/>
    </location>
    <ligand>
        <name>substrate</name>
    </ligand>
</feature>
<feature type="binding site" evidence="4">
    <location>
        <position position="278"/>
    </location>
    <ligand>
        <name>Mg(2+)</name>
        <dbReference type="ChEBI" id="CHEBI:18420"/>
        <label>1</label>
    </ligand>
</feature>
<feature type="binding site" evidence="4">
    <location>
        <position position="278"/>
    </location>
    <ligand>
        <name>Mg(2+)</name>
        <dbReference type="ChEBI" id="CHEBI:18420"/>
        <label>3</label>
    </ligand>
</feature>
<feature type="binding site" evidence="4">
    <location>
        <position position="278"/>
    </location>
    <ligand>
        <name>substrate</name>
    </ligand>
</feature>
<feature type="binding site" evidence="4">
    <location>
        <position position="321"/>
    </location>
    <ligand>
        <name>Mg(2+)</name>
        <dbReference type="ChEBI" id="CHEBI:18420"/>
        <label>1</label>
    </ligand>
</feature>
<feature type="binding site" evidence="4">
    <location>
        <position position="321"/>
    </location>
    <ligand>
        <name>Mg(2+)</name>
        <dbReference type="ChEBI" id="CHEBI:18420"/>
        <label>3</label>
    </ligand>
</feature>
<feature type="binding site" evidence="4">
    <location>
        <position position="321"/>
    </location>
    <ligand>
        <name>substrate</name>
    </ligand>
</feature>
<protein>
    <recommendedName>
        <fullName evidence="6">NAD-capped RNA hydrolase</fullName>
        <shortName evidence="6">DeNADding enzyme</shortName>
        <ecNumber evidence="4">3.6.1.-</ecNumber>
    </recommendedName>
    <alternativeName>
        <fullName>Probable NADH pyrophosphatase</fullName>
        <ecNumber evidence="2">3.6.1.22</ecNumber>
    </alternativeName>
</protein>
<gene>
    <name type="ORF">SPBC1778.03c</name>
</gene>
<reference key="1">
    <citation type="journal article" date="2002" name="Nature">
        <title>The genome sequence of Schizosaccharomyces pombe.</title>
        <authorList>
            <person name="Wood V."/>
            <person name="Gwilliam R."/>
            <person name="Rajandream M.A."/>
            <person name="Lyne M.H."/>
            <person name="Lyne R."/>
            <person name="Stewart A."/>
            <person name="Sgouros J.G."/>
            <person name="Peat N."/>
            <person name="Hayles J."/>
            <person name="Baker S.G."/>
            <person name="Basham D."/>
            <person name="Bowman S."/>
            <person name="Brooks K."/>
            <person name="Brown D."/>
            <person name="Brown S."/>
            <person name="Chillingworth T."/>
            <person name="Churcher C.M."/>
            <person name="Collins M."/>
            <person name="Connor R."/>
            <person name="Cronin A."/>
            <person name="Davis P."/>
            <person name="Feltwell T."/>
            <person name="Fraser A."/>
            <person name="Gentles S."/>
            <person name="Goble A."/>
            <person name="Hamlin N."/>
            <person name="Harris D.E."/>
            <person name="Hidalgo J."/>
            <person name="Hodgson G."/>
            <person name="Holroyd S."/>
            <person name="Hornsby T."/>
            <person name="Howarth S."/>
            <person name="Huckle E.J."/>
            <person name="Hunt S."/>
            <person name="Jagels K."/>
            <person name="James K.D."/>
            <person name="Jones L."/>
            <person name="Jones M."/>
            <person name="Leather S."/>
            <person name="McDonald S."/>
            <person name="McLean J."/>
            <person name="Mooney P."/>
            <person name="Moule S."/>
            <person name="Mungall K.L."/>
            <person name="Murphy L.D."/>
            <person name="Niblett D."/>
            <person name="Odell C."/>
            <person name="Oliver K."/>
            <person name="O'Neil S."/>
            <person name="Pearson D."/>
            <person name="Quail M.A."/>
            <person name="Rabbinowitsch E."/>
            <person name="Rutherford K.M."/>
            <person name="Rutter S."/>
            <person name="Saunders D."/>
            <person name="Seeger K."/>
            <person name="Sharp S."/>
            <person name="Skelton J."/>
            <person name="Simmonds M.N."/>
            <person name="Squares R."/>
            <person name="Squares S."/>
            <person name="Stevens K."/>
            <person name="Taylor K."/>
            <person name="Taylor R.G."/>
            <person name="Tivey A."/>
            <person name="Walsh S.V."/>
            <person name="Warren T."/>
            <person name="Whitehead S."/>
            <person name="Woodward J.R."/>
            <person name="Volckaert G."/>
            <person name="Aert R."/>
            <person name="Robben J."/>
            <person name="Grymonprez B."/>
            <person name="Weltjens I."/>
            <person name="Vanstreels E."/>
            <person name="Rieger M."/>
            <person name="Schaefer M."/>
            <person name="Mueller-Auer S."/>
            <person name="Gabel C."/>
            <person name="Fuchs M."/>
            <person name="Duesterhoeft A."/>
            <person name="Fritzc C."/>
            <person name="Holzer E."/>
            <person name="Moestl D."/>
            <person name="Hilbert H."/>
            <person name="Borzym K."/>
            <person name="Langer I."/>
            <person name="Beck A."/>
            <person name="Lehrach H."/>
            <person name="Reinhardt R."/>
            <person name="Pohl T.M."/>
            <person name="Eger P."/>
            <person name="Zimmermann W."/>
            <person name="Wedler H."/>
            <person name="Wambutt R."/>
            <person name="Purnelle B."/>
            <person name="Goffeau A."/>
            <person name="Cadieu E."/>
            <person name="Dreano S."/>
            <person name="Gloux S."/>
            <person name="Lelaure V."/>
            <person name="Mottier S."/>
            <person name="Galibert F."/>
            <person name="Aves S.J."/>
            <person name="Xiang Z."/>
            <person name="Hunt C."/>
            <person name="Moore K."/>
            <person name="Hurst S.M."/>
            <person name="Lucas M."/>
            <person name="Rochet M."/>
            <person name="Gaillardin C."/>
            <person name="Tallada V.A."/>
            <person name="Garzon A."/>
            <person name="Thode G."/>
            <person name="Daga R.R."/>
            <person name="Cruzado L."/>
            <person name="Jimenez J."/>
            <person name="Sanchez M."/>
            <person name="del Rey F."/>
            <person name="Benito J."/>
            <person name="Dominguez A."/>
            <person name="Revuelta J.L."/>
            <person name="Moreno S."/>
            <person name="Armstrong J."/>
            <person name="Forsburg S.L."/>
            <person name="Cerutti L."/>
            <person name="Lowe T."/>
            <person name="McCombie W.R."/>
            <person name="Paulsen I."/>
            <person name="Potashkin J."/>
            <person name="Shpakovski G.V."/>
            <person name="Ussery D."/>
            <person name="Barrell B.G."/>
            <person name="Nurse P."/>
        </authorList>
    </citation>
    <scope>NUCLEOTIDE SEQUENCE [LARGE SCALE GENOMIC DNA]</scope>
    <source>
        <strain>972 / ATCC 24843</strain>
    </source>
</reference>
<keyword id="KW-0378">Hydrolase</keyword>
<keyword id="KW-0460">Magnesium</keyword>
<keyword id="KW-0479">Metal-binding</keyword>
<keyword id="KW-0520">NAD</keyword>
<keyword id="KW-1185">Reference proteome</keyword>
<keyword id="KW-0862">Zinc</keyword>
<evidence type="ECO:0000250" key="1"/>
<evidence type="ECO:0000250" key="2">
    <source>
        <dbReference type="UniProtKB" id="Q94A82"/>
    </source>
</evidence>
<evidence type="ECO:0000250" key="3">
    <source>
        <dbReference type="UniProtKB" id="Q9BQG2"/>
    </source>
</evidence>
<evidence type="ECO:0000250" key="4">
    <source>
        <dbReference type="UniProtKB" id="Q9DCN1"/>
    </source>
</evidence>
<evidence type="ECO:0000255" key="5">
    <source>
        <dbReference type="PROSITE-ProRule" id="PRU00794"/>
    </source>
</evidence>
<evidence type="ECO:0000305" key="6"/>